<reference key="1">
    <citation type="journal article" date="1997" name="DNA Res.">
        <title>Structural analysis of Arabidopsis thaliana chromosome 5. III. Sequence features of the regions of 1,191,918 bp covered by seventeen physically assigned P1 clones.</title>
        <authorList>
            <person name="Nakamura Y."/>
            <person name="Sato S."/>
            <person name="Kaneko T."/>
            <person name="Kotani H."/>
            <person name="Asamizu E."/>
            <person name="Miyajima N."/>
            <person name="Tabata S."/>
        </authorList>
    </citation>
    <scope>NUCLEOTIDE SEQUENCE [LARGE SCALE GENOMIC DNA]</scope>
    <source>
        <strain>cv. Columbia</strain>
    </source>
</reference>
<reference key="2">
    <citation type="journal article" date="2017" name="Plant J.">
        <title>Araport11: a complete reannotation of the Arabidopsis thaliana reference genome.</title>
        <authorList>
            <person name="Cheng C.Y."/>
            <person name="Krishnakumar V."/>
            <person name="Chan A.P."/>
            <person name="Thibaud-Nissen F."/>
            <person name="Schobel S."/>
            <person name="Town C.D."/>
        </authorList>
    </citation>
    <scope>GENOME REANNOTATION</scope>
    <source>
        <strain>cv. Columbia</strain>
    </source>
</reference>
<reference key="3">
    <citation type="journal article" date="2002" name="Science">
        <title>Functional annotation of a full-length Arabidopsis cDNA collection.</title>
        <authorList>
            <person name="Seki M."/>
            <person name="Narusaka M."/>
            <person name="Kamiya A."/>
            <person name="Ishida J."/>
            <person name="Satou M."/>
            <person name="Sakurai T."/>
            <person name="Nakajima M."/>
            <person name="Enju A."/>
            <person name="Akiyama K."/>
            <person name="Oono Y."/>
            <person name="Muramatsu M."/>
            <person name="Hayashizaki Y."/>
            <person name="Kawai J."/>
            <person name="Carninci P."/>
            <person name="Itoh M."/>
            <person name="Ishii Y."/>
            <person name="Arakawa T."/>
            <person name="Shibata K."/>
            <person name="Shinagawa A."/>
            <person name="Shinozaki K."/>
        </authorList>
    </citation>
    <scope>NUCLEOTIDE SEQUENCE [LARGE SCALE MRNA]</scope>
    <source>
        <strain>cv. Columbia</strain>
    </source>
</reference>
<reference key="4">
    <citation type="journal article" date="2003" name="Science">
        <title>Empirical analysis of transcriptional activity in the Arabidopsis genome.</title>
        <authorList>
            <person name="Yamada K."/>
            <person name="Lim J."/>
            <person name="Dale J.M."/>
            <person name="Chen H."/>
            <person name="Shinn P."/>
            <person name="Palm C.J."/>
            <person name="Southwick A.M."/>
            <person name="Wu H.C."/>
            <person name="Kim C.J."/>
            <person name="Nguyen M."/>
            <person name="Pham P.K."/>
            <person name="Cheuk R.F."/>
            <person name="Karlin-Newmann G."/>
            <person name="Liu S.X."/>
            <person name="Lam B."/>
            <person name="Sakano H."/>
            <person name="Wu T."/>
            <person name="Yu G."/>
            <person name="Miranda M."/>
            <person name="Quach H.L."/>
            <person name="Tripp M."/>
            <person name="Chang C.H."/>
            <person name="Lee J.M."/>
            <person name="Toriumi M.J."/>
            <person name="Chan M.M."/>
            <person name="Tang C.C."/>
            <person name="Onodera C.S."/>
            <person name="Deng J.M."/>
            <person name="Akiyama K."/>
            <person name="Ansari Y."/>
            <person name="Arakawa T."/>
            <person name="Banh J."/>
            <person name="Banno F."/>
            <person name="Bowser L."/>
            <person name="Brooks S.Y."/>
            <person name="Carninci P."/>
            <person name="Chao Q."/>
            <person name="Choy N."/>
            <person name="Enju A."/>
            <person name="Goldsmith A.D."/>
            <person name="Gurjal M."/>
            <person name="Hansen N.F."/>
            <person name="Hayashizaki Y."/>
            <person name="Johnson-Hopson C."/>
            <person name="Hsuan V.W."/>
            <person name="Iida K."/>
            <person name="Karnes M."/>
            <person name="Khan S."/>
            <person name="Koesema E."/>
            <person name="Ishida J."/>
            <person name="Jiang P.X."/>
            <person name="Jones T."/>
            <person name="Kawai J."/>
            <person name="Kamiya A."/>
            <person name="Meyers C."/>
            <person name="Nakajima M."/>
            <person name="Narusaka M."/>
            <person name="Seki M."/>
            <person name="Sakurai T."/>
            <person name="Satou M."/>
            <person name="Tamse R."/>
            <person name="Vaysberg M."/>
            <person name="Wallender E.K."/>
            <person name="Wong C."/>
            <person name="Yamamura Y."/>
            <person name="Yuan S."/>
            <person name="Shinozaki K."/>
            <person name="Davis R.W."/>
            <person name="Theologis A."/>
            <person name="Ecker J.R."/>
        </authorList>
    </citation>
    <scope>NUCLEOTIDE SEQUENCE [LARGE SCALE MRNA]</scope>
    <source>
        <strain>cv. Columbia</strain>
    </source>
</reference>
<reference key="5">
    <citation type="submission" date="2002-03" db="EMBL/GenBank/DDBJ databases">
        <title>Full-length cDNA from Arabidopsis thaliana.</title>
        <authorList>
            <person name="Brover V.V."/>
            <person name="Troukhan M.E."/>
            <person name="Alexandrov N.A."/>
            <person name="Lu Y.-P."/>
            <person name="Flavell R.B."/>
            <person name="Feldmann K.A."/>
        </authorList>
    </citation>
    <scope>NUCLEOTIDE SEQUENCE [LARGE SCALE MRNA]</scope>
</reference>
<reference key="6">
    <citation type="journal article" date="2006" name="Development">
        <title>The Arabidopsis elch mutant reveals functions of an ESCRT component in cytokinesis.</title>
        <authorList>
            <person name="Spitzer C."/>
            <person name="Schellmann S."/>
            <person name="Sabovljevic A."/>
            <person name="Shahriari M."/>
            <person name="Keshavaiah C."/>
            <person name="Bechtold N."/>
            <person name="Herzog M."/>
            <person name="Mueller S."/>
            <person name="Hanisch F.-G."/>
            <person name="Huelskamp M."/>
        </authorList>
    </citation>
    <scope>IDENTIFICATION</scope>
    <scope>NOMENCLATURE</scope>
</reference>
<reference key="7">
    <citation type="journal article" date="2006" name="Trends Plant Sci.">
        <title>Exploring the ESCRTing machinery in eukaryotes.</title>
        <authorList>
            <person name="Winter V."/>
            <person name="Hauser M.-T."/>
        </authorList>
    </citation>
    <scope>IDENTIFICATION</scope>
</reference>
<reference key="8">
    <citation type="journal article" date="2010" name="Plant J.">
        <title>The AAA-type ATPase AtSKD1 contributes to vacuolar maintenance of Arabidopsis thaliana.</title>
        <authorList>
            <person name="Shahriari M."/>
            <person name="Keshavaiah C."/>
            <person name="Scheuring D."/>
            <person name="Sabovljevic A."/>
            <person name="Pimpl P."/>
            <person name="Haeusler R.E."/>
            <person name="Huelskamp M."/>
            <person name="Schellmann S."/>
        </authorList>
    </citation>
    <scope>INTERACTION WITH SKD1</scope>
    <source>
        <strain>cv. Columbia</strain>
    </source>
</reference>
<reference key="9">
    <citation type="journal article" date="2014" name="Plant Physiol.">
        <title>The Arabidopsis endosomal sorting complex required for transport III regulates internal vesicle formation of the prevacuolar compartment and is required for plant development.</title>
        <authorList>
            <person name="Cai Y."/>
            <person name="Zhuang X."/>
            <person name="Gao C."/>
            <person name="Wang X."/>
            <person name="Jiang L."/>
        </authorList>
    </citation>
    <scope>INTERACTION WITH SKD1</scope>
    <scope>REVIEW ON ESCRT-III</scope>
</reference>
<proteinExistence type="evidence at protein level"/>
<feature type="chain" id="PRO_0000368202" description="Vacuolar protein sorting-associated protein 20 homolog 1">
    <location>
        <begin position="1"/>
        <end position="219"/>
    </location>
</feature>
<feature type="region of interest" description="Disordered" evidence="4">
    <location>
        <begin position="171"/>
        <end position="219"/>
    </location>
</feature>
<feature type="coiled-coil region" evidence="3">
    <location>
        <begin position="20"/>
        <end position="60"/>
    </location>
</feature>
<feature type="compositionally biased region" description="Basic and acidic residues" evidence="4">
    <location>
        <begin position="174"/>
        <end position="186"/>
    </location>
</feature>
<feature type="compositionally biased region" description="Polar residues" evidence="4">
    <location>
        <begin position="194"/>
        <end position="209"/>
    </location>
</feature>
<feature type="sequence conflict" description="In Ref. 5; AAM62458." evidence="7" ref="5">
    <original>A</original>
    <variation>S</variation>
    <location>
        <position position="140"/>
    </location>
</feature>
<keyword id="KW-0025">Alternative splicing</keyword>
<keyword id="KW-0175">Coiled coil</keyword>
<keyword id="KW-0967">Endosome</keyword>
<keyword id="KW-0653">Protein transport</keyword>
<keyword id="KW-1185">Reference proteome</keyword>
<keyword id="KW-0813">Transport</keyword>
<dbReference type="EMBL" id="AB007646">
    <property type="protein sequence ID" value="BAB11036.1"/>
    <property type="status" value="ALT_SEQ"/>
    <property type="molecule type" value="Genomic_DNA"/>
</dbReference>
<dbReference type="EMBL" id="CP002688">
    <property type="protein sequence ID" value="AED97809.1"/>
    <property type="molecule type" value="Genomic_DNA"/>
</dbReference>
<dbReference type="EMBL" id="BT005575">
    <property type="protein sequence ID" value="AAO63995.1"/>
    <property type="molecule type" value="mRNA"/>
</dbReference>
<dbReference type="EMBL" id="AK118136">
    <property type="protein sequence ID" value="BAC42761.1"/>
    <property type="molecule type" value="mRNA"/>
</dbReference>
<dbReference type="EMBL" id="AY085225">
    <property type="protein sequence ID" value="AAM62458.1"/>
    <property type="molecule type" value="mRNA"/>
</dbReference>
<dbReference type="RefSeq" id="NP_568980.1">
    <molecule id="Q8GXN6-1"/>
    <property type="nucleotide sequence ID" value="NM_125783.4"/>
</dbReference>
<dbReference type="SMR" id="Q8GXN6"/>
<dbReference type="BioGRID" id="21750">
    <property type="interactions" value="10"/>
</dbReference>
<dbReference type="FunCoup" id="Q8GXN6">
    <property type="interactions" value="3844"/>
</dbReference>
<dbReference type="IntAct" id="Q8GXN6">
    <property type="interactions" value="8"/>
</dbReference>
<dbReference type="STRING" id="3702.Q8GXN6"/>
<dbReference type="TCDB" id="3.A.31.1.2">
    <property type="family name" value="the endosomal sorting complexes required for transport iii (escrt-iii) family"/>
</dbReference>
<dbReference type="PaxDb" id="3702-AT5G63880.2"/>
<dbReference type="ProteomicsDB" id="242622">
    <molecule id="Q8GXN6-1"/>
</dbReference>
<dbReference type="EnsemblPlants" id="AT5G63880.1">
    <molecule id="Q8GXN6-1"/>
    <property type="protein sequence ID" value="AT5G63880.1"/>
    <property type="gene ID" value="AT5G63880"/>
</dbReference>
<dbReference type="GeneID" id="836508"/>
<dbReference type="Gramene" id="AT5G63880.1">
    <molecule id="Q8GXN6-1"/>
    <property type="protein sequence ID" value="AT5G63880.1"/>
    <property type="gene ID" value="AT5G63880"/>
</dbReference>
<dbReference type="KEGG" id="ath:AT5G63880"/>
<dbReference type="Araport" id="AT5G63880"/>
<dbReference type="TAIR" id="AT5G63880">
    <property type="gene designation" value="VPS20.1"/>
</dbReference>
<dbReference type="eggNOG" id="KOG2910">
    <property type="taxonomic scope" value="Eukaryota"/>
</dbReference>
<dbReference type="InParanoid" id="Q8GXN6"/>
<dbReference type="OMA" id="RIMEETH"/>
<dbReference type="OrthoDB" id="441172at2759"/>
<dbReference type="PhylomeDB" id="Q8GXN6"/>
<dbReference type="PRO" id="PR:Q8GXN6"/>
<dbReference type="Proteomes" id="UP000006548">
    <property type="component" value="Chromosome 5"/>
</dbReference>
<dbReference type="ExpressionAtlas" id="Q8GXN6">
    <property type="expression patterns" value="baseline and differential"/>
</dbReference>
<dbReference type="GO" id="GO:0005768">
    <property type="term" value="C:endosome"/>
    <property type="evidence" value="ECO:0007669"/>
    <property type="project" value="UniProtKB-SubCell"/>
</dbReference>
<dbReference type="GO" id="GO:0015031">
    <property type="term" value="P:protein transport"/>
    <property type="evidence" value="ECO:0007669"/>
    <property type="project" value="UniProtKB-KW"/>
</dbReference>
<dbReference type="GO" id="GO:0007034">
    <property type="term" value="P:vacuolar transport"/>
    <property type="evidence" value="ECO:0007669"/>
    <property type="project" value="InterPro"/>
</dbReference>
<dbReference type="Gene3D" id="1.10.287.1060">
    <property type="entry name" value="ESAT-6-like"/>
    <property type="match status" value="1"/>
</dbReference>
<dbReference type="InterPro" id="IPR005024">
    <property type="entry name" value="Snf7_fam"/>
</dbReference>
<dbReference type="PANTHER" id="PTHR22761">
    <property type="entry name" value="CHARGED MULTIVESICULAR BODY PROTEIN"/>
    <property type="match status" value="1"/>
</dbReference>
<dbReference type="PANTHER" id="PTHR22761:SF50">
    <property type="entry name" value="VACUOLAR PROTEIN SORTING-ASSOCIATED PROTEIN 20 HOMOLOG 1"/>
    <property type="match status" value="1"/>
</dbReference>
<dbReference type="Pfam" id="PF03357">
    <property type="entry name" value="Snf7"/>
    <property type="match status" value="1"/>
</dbReference>
<sequence length="219" mass="24794">MGNLFVKKPQITEVDRAILSLKTQRRKLGQYQQKLEKVIEAEKQAARDLIREKRKDRALLALRKKRTQEELLKQVDQWVINVEQQLTDIELTSKQKAVFESLKQGNSAIKAIQSELDLDDVQKLMDDTADAKAYQDELNAILGEKLSAEDEEDILAEFDNLESQLIVDEMPEVPTKESEESEKLDLPDVPTKTPVASNAEITPAESATKTKVLEEPLPA</sequence>
<organism>
    <name type="scientific">Arabidopsis thaliana</name>
    <name type="common">Mouse-ear cress</name>
    <dbReference type="NCBI Taxonomy" id="3702"/>
    <lineage>
        <taxon>Eukaryota</taxon>
        <taxon>Viridiplantae</taxon>
        <taxon>Streptophyta</taxon>
        <taxon>Embryophyta</taxon>
        <taxon>Tracheophyta</taxon>
        <taxon>Spermatophyta</taxon>
        <taxon>Magnoliopsida</taxon>
        <taxon>eudicotyledons</taxon>
        <taxon>Gunneridae</taxon>
        <taxon>Pentapetalae</taxon>
        <taxon>rosids</taxon>
        <taxon>malvids</taxon>
        <taxon>Brassicales</taxon>
        <taxon>Brassicaceae</taxon>
        <taxon>Camelineae</taxon>
        <taxon>Arabidopsis</taxon>
    </lineage>
</organism>
<accession>Q8GXN6</accession>
<accession>Q8LEU6</accession>
<accession>Q9FN01</accession>
<comment type="function">
    <text evidence="1">Component of the ESCRT-III complex, which is required for multivesicular bodies (MVBs) formation and sorting of endosomal cargo proteins into MVBs. The ESCRT-III complex is probably involved in the concentration of MVB cargo (By similarity).</text>
</comment>
<comment type="subunit">
    <text evidence="2 5 6">Component of the endosomal sorting required for transport complex III (ESCRT-III), composed at least of VPS2, VPS20, VPS24 and VPS32 (By similarity). Interacts with SKD1 (PubMed:20663085, PubMed:24812106).</text>
</comment>
<comment type="interaction">
    <interactant intactId="EBI-3865286">
        <id>Q8GXN6</id>
    </interactant>
    <interactant intactId="EBI-3865360">
        <id>Q9FY89</id>
        <label>VPS20.2</label>
    </interactant>
    <organismsDiffer>false</organismsDiffer>
    <experiments>4</experiments>
</comment>
<comment type="interaction">
    <interactant intactId="EBI-3865286">
        <id>Q8GXN6</id>
    </interactant>
    <interactant intactId="EBI-3865350">
        <id>Q8VZC9</id>
        <label>VPS25</label>
    </interactant>
    <organismsDiffer>false</organismsDiffer>
    <experiments>4</experiments>
</comment>
<comment type="interaction">
    <interactant intactId="EBI-3865286">
        <id>Q8GXN6</id>
    </interactant>
    <interactant intactId="EBI-3865938">
        <id>O82197</id>
        <label>VPS32.1</label>
    </interactant>
    <organismsDiffer>false</organismsDiffer>
    <experiments>4</experiments>
</comment>
<comment type="interaction">
    <interactant intactId="EBI-3865286">
        <id>Q8GXN6</id>
    </interactant>
    <interactant intactId="EBI-3865302">
        <id>Q9FF81</id>
        <label>VPS36</label>
    </interactant>
    <organismsDiffer>false</organismsDiffer>
    <experiments>5</experiments>
</comment>
<comment type="subcellular location">
    <subcellularLocation>
        <location evidence="1">Endosome</location>
    </subcellularLocation>
</comment>
<comment type="alternative products">
    <event type="alternative splicing"/>
    <isoform>
        <id>Q8GXN6-1</id>
        <name>1</name>
        <sequence type="displayed"/>
    </isoform>
    <text>A number of isoforms are produced. According to EST sequences.</text>
</comment>
<comment type="similarity">
    <text evidence="7">Belongs to the SNF7 family.</text>
</comment>
<comment type="sequence caution" evidence="7">
    <conflict type="erroneous gene model prediction">
        <sequence resource="EMBL-CDS" id="BAB11036"/>
    </conflict>
</comment>
<protein>
    <recommendedName>
        <fullName>Vacuolar protein sorting-associated protein 20 homolog 1</fullName>
        <shortName>AtVPS20-1</shortName>
    </recommendedName>
    <alternativeName>
        <fullName>Charged multivesicular body protein 6 homolog 1</fullName>
    </alternativeName>
    <alternativeName>
        <fullName>ESCRT-III complex subunit VPS20 homolog 1</fullName>
    </alternativeName>
</protein>
<name>VP201_ARATH</name>
<evidence type="ECO:0000250" key="1"/>
<evidence type="ECO:0000250" key="2">
    <source>
        <dbReference type="UniProtKB" id="Q96FZ7"/>
    </source>
</evidence>
<evidence type="ECO:0000255" key="3"/>
<evidence type="ECO:0000256" key="4">
    <source>
        <dbReference type="SAM" id="MobiDB-lite"/>
    </source>
</evidence>
<evidence type="ECO:0000269" key="5">
    <source>
    </source>
</evidence>
<evidence type="ECO:0000269" key="6">
    <source>
    </source>
</evidence>
<evidence type="ECO:0000305" key="7"/>
<gene>
    <name type="primary">VPS20.1</name>
    <name type="synonym">CHMP6-1</name>
    <name type="ordered locus">At5g63880</name>
    <name type="ORF">MGI19.8</name>
</gene>